<protein>
    <recommendedName>
        <fullName evidence="1">Ribonucleoside-diphosphate reductase large subunit</fullName>
        <shortName evidence="1">R1</shortName>
        <ecNumber evidence="1">1.17.4.1</ecNumber>
    </recommendedName>
    <alternativeName>
        <fullName evidence="1">Ribonucleotide reductase large subunit</fullName>
    </alternativeName>
</protein>
<dbReference type="EC" id="1.17.4.1" evidence="1"/>
<dbReference type="EMBL" id="Z54206">
    <property type="protein sequence ID" value="CAA90929.1"/>
    <property type="molecule type" value="Genomic_DNA"/>
</dbReference>
<dbReference type="EMBL" id="Z49078">
    <property type="protein sequence ID" value="CAA88900.1"/>
    <property type="molecule type" value="Genomic_DNA"/>
</dbReference>
<dbReference type="EMBL" id="AJ004801">
    <property type="protein sequence ID" value="CAA06094.1"/>
    <property type="molecule type" value="Genomic_DNA"/>
</dbReference>
<dbReference type="RefSeq" id="NP_045319.1">
    <property type="nucleotide sequence ID" value="NC_001847.1"/>
</dbReference>
<dbReference type="SMR" id="P50646"/>
<dbReference type="Proteomes" id="UP000202075">
    <property type="component" value="Segment"/>
</dbReference>
<dbReference type="GO" id="GO:0005524">
    <property type="term" value="F:ATP binding"/>
    <property type="evidence" value="ECO:0007669"/>
    <property type="project" value="UniProtKB-UniRule"/>
</dbReference>
<dbReference type="GO" id="GO:0004748">
    <property type="term" value="F:ribonucleoside-diphosphate reductase activity, thioredoxin disulfide as acceptor"/>
    <property type="evidence" value="ECO:0007669"/>
    <property type="project" value="UniProtKB-UniRule"/>
</dbReference>
<dbReference type="GO" id="GO:0009263">
    <property type="term" value="P:deoxyribonucleotide biosynthetic process"/>
    <property type="evidence" value="ECO:0007669"/>
    <property type="project" value="InterPro"/>
</dbReference>
<dbReference type="GO" id="GO:0006260">
    <property type="term" value="P:DNA replication"/>
    <property type="evidence" value="ECO:0007669"/>
    <property type="project" value="UniProtKB-KW"/>
</dbReference>
<dbReference type="GO" id="GO:0019046">
    <property type="term" value="P:release from viral latency"/>
    <property type="evidence" value="ECO:0007669"/>
    <property type="project" value="UniProtKB-KW"/>
</dbReference>
<dbReference type="Gene3D" id="3.20.70.20">
    <property type="match status" value="1"/>
</dbReference>
<dbReference type="HAMAP" id="MF_04026">
    <property type="entry name" value="HSV_RIR1"/>
    <property type="match status" value="1"/>
</dbReference>
<dbReference type="InterPro" id="IPR034717">
    <property type="entry name" value="HSV_RIR1"/>
</dbReference>
<dbReference type="InterPro" id="IPR013346">
    <property type="entry name" value="NrdE_NrdA_C"/>
</dbReference>
<dbReference type="InterPro" id="IPR000788">
    <property type="entry name" value="RNR_lg_C"/>
</dbReference>
<dbReference type="InterPro" id="IPR013509">
    <property type="entry name" value="RNR_lsu_N"/>
</dbReference>
<dbReference type="InterPro" id="IPR039718">
    <property type="entry name" value="Rrm1"/>
</dbReference>
<dbReference type="NCBIfam" id="TIGR02506">
    <property type="entry name" value="NrdE_NrdA"/>
    <property type="match status" value="1"/>
</dbReference>
<dbReference type="PANTHER" id="PTHR11573">
    <property type="entry name" value="RIBONUCLEOSIDE-DIPHOSPHATE REDUCTASE LARGE CHAIN"/>
    <property type="match status" value="1"/>
</dbReference>
<dbReference type="PANTHER" id="PTHR11573:SF6">
    <property type="entry name" value="RIBONUCLEOSIDE-DIPHOSPHATE REDUCTASE LARGE SUBUNIT"/>
    <property type="match status" value="1"/>
</dbReference>
<dbReference type="Pfam" id="PF02867">
    <property type="entry name" value="Ribonuc_red_lgC"/>
    <property type="match status" value="1"/>
</dbReference>
<dbReference type="Pfam" id="PF00317">
    <property type="entry name" value="Ribonuc_red_lgN"/>
    <property type="match status" value="1"/>
</dbReference>
<dbReference type="PRINTS" id="PR01183">
    <property type="entry name" value="RIBORDTASEM1"/>
</dbReference>
<dbReference type="SUPFAM" id="SSF51998">
    <property type="entry name" value="PFL-like glycyl radical enzymes"/>
    <property type="match status" value="1"/>
</dbReference>
<dbReference type="PROSITE" id="PS00089">
    <property type="entry name" value="RIBORED_LARGE"/>
    <property type="match status" value="1"/>
</dbReference>
<proteinExistence type="inferred from homology"/>
<organismHost>
    <name type="scientific">Bos taurus</name>
    <name type="common">Bovine</name>
    <dbReference type="NCBI Taxonomy" id="9913"/>
</organismHost>
<organism>
    <name type="scientific">Bovine herpesvirus 1.1 (strain Cooper)</name>
    <name type="common">BoHV-1</name>
    <name type="synonym">Infectious bovine rhinotracheitis virus</name>
    <dbReference type="NCBI Taxonomy" id="10323"/>
    <lineage>
        <taxon>Viruses</taxon>
        <taxon>Duplodnaviria</taxon>
        <taxon>Heunggongvirae</taxon>
        <taxon>Peploviricota</taxon>
        <taxon>Herviviricetes</taxon>
        <taxon>Herpesvirales</taxon>
        <taxon>Orthoherpesviridae</taxon>
        <taxon>Alphaherpesvirinae</taxon>
        <taxon>Varicellovirus</taxon>
        <taxon>Varicellovirus bovinealpha1</taxon>
    </lineage>
</organism>
<feature type="chain" id="PRO_0000187240" description="Ribonucleoside-diphosphate reductase large subunit">
    <location>
        <begin position="1"/>
        <end position="787"/>
    </location>
</feature>
<feature type="active site" description="Proton acceptor" evidence="1">
    <location>
        <position position="436"/>
    </location>
</feature>
<feature type="active site" description="Cysteine radical intermediate" evidence="1">
    <location>
        <position position="438"/>
    </location>
</feature>
<feature type="active site" description="Proton acceptor" evidence="1">
    <location>
        <position position="440"/>
    </location>
</feature>
<feature type="binding site" evidence="1">
    <location>
        <position position="209"/>
    </location>
    <ligand>
        <name>substrate</name>
    </ligand>
</feature>
<feature type="binding site" evidence="1">
    <location>
        <begin position="224"/>
        <end position="225"/>
    </location>
    <ligand>
        <name>substrate</name>
    </ligand>
</feature>
<feature type="binding site" evidence="1">
    <location>
        <position position="255"/>
    </location>
    <ligand>
        <name>substrate</name>
    </ligand>
</feature>
<feature type="binding site" evidence="1">
    <location>
        <begin position="436"/>
        <end position="440"/>
    </location>
    <ligand>
        <name>substrate</name>
    </ligand>
</feature>
<feature type="binding site" evidence="1">
    <location>
        <begin position="618"/>
        <end position="622"/>
    </location>
    <ligand>
        <name>substrate</name>
    </ligand>
</feature>
<feature type="site" description="Important for hydrogen atom transfer" evidence="1">
    <location>
        <position position="225"/>
    </location>
</feature>
<feature type="site" description="Important for hydrogen atom transfer" evidence="1">
    <location>
        <position position="453"/>
    </location>
</feature>
<feature type="site" description="Important for electron transfer" evidence="1">
    <location>
        <position position="762"/>
    </location>
</feature>
<feature type="site" description="Important for electron transfer" evidence="1">
    <location>
        <position position="763"/>
    </location>
</feature>
<feature type="site" description="Interacts with thioredoxin/glutaredoxin" evidence="1">
    <location>
        <position position="782"/>
    </location>
</feature>
<feature type="site" description="Interacts with thioredoxin/glutaredoxin" evidence="1">
    <location>
        <position position="785"/>
    </location>
</feature>
<feature type="disulfide bond" description="Redox-active" evidence="1">
    <location>
        <begin position="225"/>
        <end position="453"/>
    </location>
</feature>
<keyword id="KW-0067">ATP-binding</keyword>
<keyword id="KW-1015">Disulfide bond</keyword>
<keyword id="KW-0235">DNA replication</keyword>
<keyword id="KW-0244">Early protein</keyword>
<keyword id="KW-0547">Nucleotide-binding</keyword>
<keyword id="KW-0560">Oxidoreductase</keyword>
<keyword id="KW-1251">Viral latency</keyword>
<keyword id="KW-1272">Viral reactivation from latency</keyword>
<accession>P50646</accession>
<gene>
    <name evidence="1" type="primary">RIR1</name>
    <name type="ordered locus">UL39</name>
</gene>
<comment type="function">
    <text evidence="1">Ribonucleoside-diphosphate reductase holoenzyme provides the precursors necessary for viral DNA synthesis. Allows virus growth in non-dividing cells, as well as reactivation from latency in infected hosts. Catalyzes the biosynthesis of deoxyribonucleotides from the corresponding ribonucleotides.</text>
</comment>
<comment type="catalytic activity">
    <reaction evidence="1">
        <text>a 2'-deoxyribonucleoside 5'-diphosphate + [thioredoxin]-disulfide + H2O = a ribonucleoside 5'-diphosphate + [thioredoxin]-dithiol</text>
        <dbReference type="Rhea" id="RHEA:23252"/>
        <dbReference type="Rhea" id="RHEA-COMP:10698"/>
        <dbReference type="Rhea" id="RHEA-COMP:10700"/>
        <dbReference type="ChEBI" id="CHEBI:15377"/>
        <dbReference type="ChEBI" id="CHEBI:29950"/>
        <dbReference type="ChEBI" id="CHEBI:50058"/>
        <dbReference type="ChEBI" id="CHEBI:57930"/>
        <dbReference type="ChEBI" id="CHEBI:73316"/>
        <dbReference type="EC" id="1.17.4.1"/>
    </reaction>
</comment>
<comment type="subunit">
    <text evidence="1">Heterotetramer composed of a homodimer of the large subunit (R1) and a homodimer of the small subunit (R2). Larger multisubunit protein complex are also active, composed of (R1)n(R2)n.</text>
</comment>
<comment type="similarity">
    <text evidence="1">Belongs to the ribonucleoside diphosphate reductase large chain family.</text>
</comment>
<evidence type="ECO:0000255" key="1">
    <source>
        <dbReference type="HAMAP-Rule" id="MF_04026"/>
    </source>
</evidence>
<sequence>MASDAFMQTACPADAAEQLEAEHAEWAQLGCGAVPPPPAAASRPSRAAVAAYVGEVVDRMRAQSRADERVYVKCGQLVHLRVRARSVPLDDWLTSAELALVSEVAEPVRANRAFVEVSLRYFELTEYATLRALGLQSALKYEEMYLAKLEGGAIESMGQFFVRIAATAATWTMREPAFGRALVGEGATWCAVFNAYLTALYRQLVVPATPIMLFAGRARGSLASCYLLNPQVSSSTEAVEAITTEVARILLNRGGIGISFQSFDRAVSRDCKRGIMGALKLLDSMAMAINSDSERPTGICVYLEPWHCDVRAVLNMRGLLARDESTRCDNLFSCLWVPDLLFDRYLAHLEGREGVVWTLFDDRASHLSRLHGPAFTAEYERLEREGLGVETVPVQDLAFLIVRSIVMTGSPFVMFKDACNRHYHMDTAGDALTGSNLCTEIVQRASPDAHGVCNLASVNLPRCVREGEGGALAFDFAALSTAAATAAIFVNAMMLGGQYPTEKAARGVARHRSLGIGFQGLHTLLLELGMDMLSPAARRLNVEIAERLLLAVMATSATLCEYGCAPFEDFARSKFARGLMPFDGYEGVVLSLPRAWARLREKVARHGLYNAQFVALMPTVSSSQVTEGSEGFSPVFTNMFSKVTMSGELLRPNLPLMRALRKHFTREASRLGAVRALDREQWSVAAALGDLAPGHPLAKFKTAFEYDQERLIDLCADRAPFVDQSQSMSLFVTEPMDGKVPASQIMNLLVYAYKKGLKTGLYYCKIRKATNNGVFTGGDLVCSGCHL</sequence>
<name>RIR1_BHV1C</name>
<reference key="1">
    <citation type="journal article" date="1995" name="Virology">
        <title>Sequence analysis of the UL39, UL38, and UL37 homologues of bovine herpesvirus 1 and expression studies of UL40 and UL39, the subunits of ribonucleotide reductase.</title>
        <authorList>
            <person name="Simard C."/>
            <person name="Langlois I."/>
            <person name="Styger D."/>
            <person name="Vogt B."/>
            <person name="Vlcek C."/>
            <person name="Chalifour A."/>
            <person name="Trudel M."/>
            <person name="Schwyzer M."/>
        </authorList>
    </citation>
    <scope>NUCLEOTIDE SEQUENCE [GENOMIC DNA]</scope>
</reference>
<reference key="2">
    <citation type="journal article" date="1996" name="Vet. Microbiol.">
        <title>Gene contents in a 31-kb segment at the left genome end of bovine herpesvirus-1.</title>
        <authorList>
            <person name="Schwyzer M."/>
            <person name="Styger D."/>
            <person name="Vogt B."/>
            <person name="Lowery D.E."/>
            <person name="Simard C."/>
            <person name="LaBoissiere S."/>
            <person name="Misra V."/>
            <person name="Vlcek C."/>
            <person name="Paces V."/>
        </authorList>
    </citation>
    <scope>NUCLEOTIDE SEQUENCE [GENOMIC DNA]</scope>
</reference>
<reference key="3">
    <citation type="journal article" date="2009" name="Trends Biochem. Sci.">
        <title>Tinkering with a viral ribonucleotide reductase.</title>
        <authorList>
            <person name="Lembo D."/>
            <person name="Brune W."/>
        </authorList>
    </citation>
    <scope>REVIEW</scope>
</reference>